<protein>
    <recommendedName>
        <fullName>Thioredoxin H-type 2</fullName>
        <shortName>Trx-H2</shortName>
    </recommendedName>
</protein>
<accession>Q07090</accession>
<comment type="function">
    <text evidence="1">Participates in various redox reactions through the reversible oxidation of the active center dithiol to a disulfide. The H form is known to activate a number of cytosolic enzymes (By similarity).</text>
</comment>
<comment type="subcellular location">
    <subcellularLocation>
        <location evidence="1">Cytoplasm</location>
    </subcellularLocation>
</comment>
<comment type="similarity">
    <text evidence="3">Belongs to the thioredoxin family. Plant H-type subfamily.</text>
</comment>
<keyword id="KW-0963">Cytoplasm</keyword>
<keyword id="KW-1015">Disulfide bond</keyword>
<keyword id="KW-0249">Electron transport</keyword>
<keyword id="KW-0676">Redox-active center</keyword>
<keyword id="KW-1185">Reference proteome</keyword>
<keyword id="KW-0813">Transport</keyword>
<proteinExistence type="inferred from homology"/>
<evidence type="ECO:0000250" key="1"/>
<evidence type="ECO:0000255" key="2">
    <source>
        <dbReference type="PROSITE-ProRule" id="PRU00691"/>
    </source>
</evidence>
<evidence type="ECO:0000305" key="3"/>
<sequence>MAEEGQVIGVHTVDAWNEHLQKGIDDKKLIVVDFTASWCGPCKFIASFYAELAKKMPTVTFLKVDVDELKSVATDWAVEAMPTFMFLKEGKIVDKVVGAKKDELQQTIAKHISSTSTA</sequence>
<dbReference type="EMBL" id="Z11803">
    <property type="protein sequence ID" value="CAA77847.1"/>
    <property type="molecule type" value="Genomic_DNA"/>
</dbReference>
<dbReference type="PIR" id="S34812">
    <property type="entry name" value="S34812"/>
</dbReference>
<dbReference type="SMR" id="Q07090"/>
<dbReference type="STRING" id="4097.Q07090"/>
<dbReference type="PaxDb" id="4097-Q07090"/>
<dbReference type="Proteomes" id="UP000084051">
    <property type="component" value="Unplaced"/>
</dbReference>
<dbReference type="GO" id="GO:0005737">
    <property type="term" value="C:cytoplasm"/>
    <property type="evidence" value="ECO:0007669"/>
    <property type="project" value="UniProtKB-SubCell"/>
</dbReference>
<dbReference type="CDD" id="cd02947">
    <property type="entry name" value="TRX_family"/>
    <property type="match status" value="1"/>
</dbReference>
<dbReference type="FunFam" id="3.40.30.10:FF:000104">
    <property type="entry name" value="Thioredoxin"/>
    <property type="match status" value="1"/>
</dbReference>
<dbReference type="Gene3D" id="3.40.30.10">
    <property type="entry name" value="Glutaredoxin"/>
    <property type="match status" value="1"/>
</dbReference>
<dbReference type="InterPro" id="IPR036249">
    <property type="entry name" value="Thioredoxin-like_sf"/>
</dbReference>
<dbReference type="InterPro" id="IPR017937">
    <property type="entry name" value="Thioredoxin_CS"/>
</dbReference>
<dbReference type="InterPro" id="IPR013766">
    <property type="entry name" value="Thioredoxin_domain"/>
</dbReference>
<dbReference type="InterPro" id="IPR050620">
    <property type="entry name" value="Thioredoxin_H-type-like"/>
</dbReference>
<dbReference type="PANTHER" id="PTHR10438">
    <property type="entry name" value="THIOREDOXIN"/>
    <property type="match status" value="1"/>
</dbReference>
<dbReference type="PANTHER" id="PTHR10438:SF437">
    <property type="entry name" value="THIOREDOXIN H-TYPE 2"/>
    <property type="match status" value="1"/>
</dbReference>
<dbReference type="Pfam" id="PF00085">
    <property type="entry name" value="Thioredoxin"/>
    <property type="match status" value="1"/>
</dbReference>
<dbReference type="PRINTS" id="PR00421">
    <property type="entry name" value="THIOREDOXIN"/>
</dbReference>
<dbReference type="SUPFAM" id="SSF52833">
    <property type="entry name" value="Thioredoxin-like"/>
    <property type="match status" value="1"/>
</dbReference>
<dbReference type="PROSITE" id="PS00194">
    <property type="entry name" value="THIOREDOXIN_1"/>
    <property type="match status" value="1"/>
</dbReference>
<dbReference type="PROSITE" id="PS51352">
    <property type="entry name" value="THIOREDOXIN_2"/>
    <property type="match status" value="1"/>
</dbReference>
<feature type="chain" id="PRO_0000120062" description="Thioredoxin H-type 2">
    <location>
        <begin position="1"/>
        <end position="118"/>
    </location>
</feature>
<feature type="domain" description="Thioredoxin" evidence="2">
    <location>
        <begin position="2"/>
        <end position="113"/>
    </location>
</feature>
<feature type="active site" description="Nucleophile" evidence="1">
    <location>
        <position position="39"/>
    </location>
</feature>
<feature type="active site" description="Nucleophile" evidence="1">
    <location>
        <position position="42"/>
    </location>
</feature>
<feature type="site" description="Deprotonates C-terminal active site Cys" evidence="1">
    <location>
        <position position="33"/>
    </location>
</feature>
<feature type="site" description="Contributes to redox potential value" evidence="1">
    <location>
        <position position="40"/>
    </location>
</feature>
<feature type="site" description="Contributes to redox potential value" evidence="1">
    <location>
        <position position="41"/>
    </location>
</feature>
<feature type="disulfide bond" description="Redox-active" evidence="2">
    <location>
        <begin position="39"/>
        <end position="42"/>
    </location>
</feature>
<name>TRXH2_TOBAC</name>
<reference key="1">
    <citation type="journal article" date="1993" name="Mol. Gen. Genet.">
        <title>The Nicotiana tabacum genome encodes two cytoplasmic thioredoxin genes which are differently expressed.</title>
        <authorList>
            <person name="Brugidou C."/>
            <person name="Marty I."/>
            <person name="Chartier Y."/>
            <person name="Meyer Y."/>
        </authorList>
    </citation>
    <scope>NUCLEOTIDE SEQUENCE [GENOMIC DNA]</scope>
</reference>
<organism>
    <name type="scientific">Nicotiana tabacum</name>
    <name type="common">Common tobacco</name>
    <dbReference type="NCBI Taxonomy" id="4097"/>
    <lineage>
        <taxon>Eukaryota</taxon>
        <taxon>Viridiplantae</taxon>
        <taxon>Streptophyta</taxon>
        <taxon>Embryophyta</taxon>
        <taxon>Tracheophyta</taxon>
        <taxon>Spermatophyta</taxon>
        <taxon>Magnoliopsida</taxon>
        <taxon>eudicotyledons</taxon>
        <taxon>Gunneridae</taxon>
        <taxon>Pentapetalae</taxon>
        <taxon>asterids</taxon>
        <taxon>lamiids</taxon>
        <taxon>Solanales</taxon>
        <taxon>Solanaceae</taxon>
        <taxon>Nicotianoideae</taxon>
        <taxon>Nicotianeae</taxon>
        <taxon>Nicotiana</taxon>
    </lineage>
</organism>